<proteinExistence type="inferred from homology"/>
<sequence>MGFNIERVDKPFVVKSPYQPSGDQPKAIEELATRIENGENDVVLMGATGTGKTATTAWLIERLQRPTLIIEPNKTLAAQLCAEFRELMPDNAVSYFVSYYDYYQPEAYIPQTDTYIEKDSNINDDVERLRHQATANLLTRRDCVVVATVSCIYGLGTPEEYAGRMLFLKEGQQINRDDLLRRFVAMQYKRNDIAFTRGTFRVRGDTVEIIPVYEELAIRIEFFGDEIDRISTLHPLTGDVIAHEPQVHIFPASHYVAGPERMERALKTIREELDGRLSELRKQGKELEAQRLDMRTTYDLEMLTQVGVCSGVENYSRHLDGRAAGTPPHTLLDFFPDDFLLVIDESHVTVPQIGAMYEGDASRKRTLVEHGFRLPSAMDNRPLKWPEFLQRVGQTVYLSATPGDYELGLSDGVVEQIIRPTGLLDPKIDVRPVKGQIDDLLAEIKARVARNERALVTTLTKKMAEDLTDYLLERGIKVEYLHSDVDTLRRVELLRMLREGKIDVIVGINLLREGLDLPEVSLVAILDADKEGFLRSYRSLIQTIGRAARNVSGVVIMYADETTEAMRQAIDETDRRRAKQIAYNQEHGIDPKPLIKKISDVNDMLAKEDVDTQTLLEGGYRNAGKAGNTHLGVPVLDPNEADKRHEEILKAGLPAQDLADLIRQLSEQMHTAAEQLQFELAARLRDEIRDLKKELRQMTEAGQ</sequence>
<dbReference type="EMBL" id="CP001095">
    <property type="protein sequence ID" value="ACJ52822.1"/>
    <property type="molecule type" value="Genomic_DNA"/>
</dbReference>
<dbReference type="EMBL" id="AP010889">
    <property type="protein sequence ID" value="BAJ69386.1"/>
    <property type="molecule type" value="Genomic_DNA"/>
</dbReference>
<dbReference type="RefSeq" id="WP_012578046.1">
    <property type="nucleotide sequence ID" value="NC_011593.1"/>
</dbReference>
<dbReference type="SMR" id="B7GSZ2"/>
<dbReference type="KEGG" id="bln:Blon_1747"/>
<dbReference type="KEGG" id="blon:BLIJ_1806"/>
<dbReference type="PATRIC" id="fig|391904.8.peg.1814"/>
<dbReference type="HOGENOM" id="CLU_009621_2_1_11"/>
<dbReference type="Proteomes" id="UP000001360">
    <property type="component" value="Chromosome"/>
</dbReference>
<dbReference type="GO" id="GO:0005737">
    <property type="term" value="C:cytoplasm"/>
    <property type="evidence" value="ECO:0007669"/>
    <property type="project" value="UniProtKB-SubCell"/>
</dbReference>
<dbReference type="GO" id="GO:0009380">
    <property type="term" value="C:excinuclease repair complex"/>
    <property type="evidence" value="ECO:0007669"/>
    <property type="project" value="InterPro"/>
</dbReference>
<dbReference type="GO" id="GO:0005524">
    <property type="term" value="F:ATP binding"/>
    <property type="evidence" value="ECO:0007669"/>
    <property type="project" value="UniProtKB-UniRule"/>
</dbReference>
<dbReference type="GO" id="GO:0016887">
    <property type="term" value="F:ATP hydrolysis activity"/>
    <property type="evidence" value="ECO:0007669"/>
    <property type="project" value="InterPro"/>
</dbReference>
<dbReference type="GO" id="GO:0003677">
    <property type="term" value="F:DNA binding"/>
    <property type="evidence" value="ECO:0007669"/>
    <property type="project" value="UniProtKB-UniRule"/>
</dbReference>
<dbReference type="GO" id="GO:0009381">
    <property type="term" value="F:excinuclease ABC activity"/>
    <property type="evidence" value="ECO:0007669"/>
    <property type="project" value="UniProtKB-UniRule"/>
</dbReference>
<dbReference type="GO" id="GO:0004386">
    <property type="term" value="F:helicase activity"/>
    <property type="evidence" value="ECO:0007669"/>
    <property type="project" value="UniProtKB-KW"/>
</dbReference>
<dbReference type="GO" id="GO:0006289">
    <property type="term" value="P:nucleotide-excision repair"/>
    <property type="evidence" value="ECO:0007669"/>
    <property type="project" value="UniProtKB-UniRule"/>
</dbReference>
<dbReference type="GO" id="GO:0009432">
    <property type="term" value="P:SOS response"/>
    <property type="evidence" value="ECO:0007669"/>
    <property type="project" value="UniProtKB-UniRule"/>
</dbReference>
<dbReference type="CDD" id="cd17916">
    <property type="entry name" value="DEXHc_UvrB"/>
    <property type="match status" value="1"/>
</dbReference>
<dbReference type="CDD" id="cd18790">
    <property type="entry name" value="SF2_C_UvrB"/>
    <property type="match status" value="1"/>
</dbReference>
<dbReference type="FunFam" id="4.10.860.10:FF:000009">
    <property type="entry name" value="UvrABC system protein B"/>
    <property type="match status" value="1"/>
</dbReference>
<dbReference type="Gene3D" id="3.40.50.300">
    <property type="entry name" value="P-loop containing nucleotide triphosphate hydrolases"/>
    <property type="match status" value="3"/>
</dbReference>
<dbReference type="Gene3D" id="4.10.860.10">
    <property type="entry name" value="UVR domain"/>
    <property type="match status" value="1"/>
</dbReference>
<dbReference type="HAMAP" id="MF_00204">
    <property type="entry name" value="UvrB"/>
    <property type="match status" value="1"/>
</dbReference>
<dbReference type="InterPro" id="IPR006935">
    <property type="entry name" value="Helicase/UvrB_N"/>
</dbReference>
<dbReference type="InterPro" id="IPR014001">
    <property type="entry name" value="Helicase_ATP-bd"/>
</dbReference>
<dbReference type="InterPro" id="IPR001650">
    <property type="entry name" value="Helicase_C-like"/>
</dbReference>
<dbReference type="InterPro" id="IPR027417">
    <property type="entry name" value="P-loop_NTPase"/>
</dbReference>
<dbReference type="InterPro" id="IPR001943">
    <property type="entry name" value="UVR_dom"/>
</dbReference>
<dbReference type="InterPro" id="IPR036876">
    <property type="entry name" value="UVR_dom_sf"/>
</dbReference>
<dbReference type="InterPro" id="IPR004807">
    <property type="entry name" value="UvrB"/>
</dbReference>
<dbReference type="InterPro" id="IPR041471">
    <property type="entry name" value="UvrB_inter"/>
</dbReference>
<dbReference type="InterPro" id="IPR024759">
    <property type="entry name" value="UvrB_YAD/RRR_dom"/>
</dbReference>
<dbReference type="NCBIfam" id="NF003673">
    <property type="entry name" value="PRK05298.1"/>
    <property type="match status" value="1"/>
</dbReference>
<dbReference type="NCBIfam" id="TIGR00631">
    <property type="entry name" value="uvrb"/>
    <property type="match status" value="1"/>
</dbReference>
<dbReference type="PANTHER" id="PTHR24029">
    <property type="entry name" value="UVRABC SYSTEM PROTEIN B"/>
    <property type="match status" value="1"/>
</dbReference>
<dbReference type="PANTHER" id="PTHR24029:SF0">
    <property type="entry name" value="UVRABC SYSTEM PROTEIN B"/>
    <property type="match status" value="1"/>
</dbReference>
<dbReference type="Pfam" id="PF00271">
    <property type="entry name" value="Helicase_C"/>
    <property type="match status" value="1"/>
</dbReference>
<dbReference type="Pfam" id="PF04851">
    <property type="entry name" value="ResIII"/>
    <property type="match status" value="1"/>
</dbReference>
<dbReference type="Pfam" id="PF02151">
    <property type="entry name" value="UVR"/>
    <property type="match status" value="1"/>
</dbReference>
<dbReference type="Pfam" id="PF12344">
    <property type="entry name" value="UvrB"/>
    <property type="match status" value="1"/>
</dbReference>
<dbReference type="Pfam" id="PF17757">
    <property type="entry name" value="UvrB_inter"/>
    <property type="match status" value="1"/>
</dbReference>
<dbReference type="SMART" id="SM00487">
    <property type="entry name" value="DEXDc"/>
    <property type="match status" value="1"/>
</dbReference>
<dbReference type="SMART" id="SM00490">
    <property type="entry name" value="HELICc"/>
    <property type="match status" value="1"/>
</dbReference>
<dbReference type="SUPFAM" id="SSF46600">
    <property type="entry name" value="C-terminal UvrC-binding domain of UvrB"/>
    <property type="match status" value="1"/>
</dbReference>
<dbReference type="SUPFAM" id="SSF52540">
    <property type="entry name" value="P-loop containing nucleoside triphosphate hydrolases"/>
    <property type="match status" value="2"/>
</dbReference>
<dbReference type="PROSITE" id="PS51192">
    <property type="entry name" value="HELICASE_ATP_BIND_1"/>
    <property type="match status" value="1"/>
</dbReference>
<dbReference type="PROSITE" id="PS51194">
    <property type="entry name" value="HELICASE_CTER"/>
    <property type="match status" value="1"/>
</dbReference>
<dbReference type="PROSITE" id="PS50151">
    <property type="entry name" value="UVR"/>
    <property type="match status" value="1"/>
</dbReference>
<comment type="function">
    <text evidence="1">The UvrABC repair system catalyzes the recognition and processing of DNA lesions. A damage recognition complex composed of 2 UvrA and 2 UvrB subunits scans DNA for abnormalities. Upon binding of the UvrA(2)B(2) complex to a putative damaged site, the DNA wraps around one UvrB monomer. DNA wrap is dependent on ATP binding by UvrB and probably causes local melting of the DNA helix, facilitating insertion of UvrB beta-hairpin between the DNA strands. Then UvrB probes one DNA strand for the presence of a lesion. If a lesion is found the UvrA subunits dissociate and the UvrB-DNA preincision complex is formed. This complex is subsequently bound by UvrC and the second UvrB is released. If no lesion is found, the DNA wraps around the other UvrB subunit that will check the other stand for damage.</text>
</comment>
<comment type="subunit">
    <text evidence="1">Forms a heterotetramer with UvrA during the search for lesions. Interacts with UvrC in an incision complex.</text>
</comment>
<comment type="subcellular location">
    <subcellularLocation>
        <location evidence="1">Cytoplasm</location>
    </subcellularLocation>
</comment>
<comment type="domain">
    <text evidence="1">The beta-hairpin motif is involved in DNA binding.</text>
</comment>
<comment type="similarity">
    <text evidence="1">Belongs to the UvrB family.</text>
</comment>
<reference key="1">
    <citation type="journal article" date="2008" name="Proc. Natl. Acad. Sci. U.S.A.">
        <title>The genome sequence of Bifidobacterium longum subsp. infantis reveals adaptations for milk utilization within the infant microbiome.</title>
        <authorList>
            <person name="Sela D.A."/>
            <person name="Chapman J."/>
            <person name="Adeuya A."/>
            <person name="Kim J.H."/>
            <person name="Chen F."/>
            <person name="Whitehead T.R."/>
            <person name="Lapidus A."/>
            <person name="Rokhsar D.S."/>
            <person name="Lebrilla C.B."/>
            <person name="German J.B."/>
            <person name="Price N.P."/>
            <person name="Richardson P.M."/>
            <person name="Mills D.A."/>
        </authorList>
    </citation>
    <scope>NUCLEOTIDE SEQUENCE [LARGE SCALE GENOMIC DNA]</scope>
    <source>
        <strain>ATCC 15697 / DSM 20088 / JCM 1222 / NCTC 11817 / S12</strain>
    </source>
</reference>
<reference key="2">
    <citation type="journal article" date="2011" name="Nature">
        <title>Bifidobacteria can protect from enteropathogenic infection through production of acetate.</title>
        <authorList>
            <person name="Fukuda S."/>
            <person name="Toh H."/>
            <person name="Hase K."/>
            <person name="Oshima K."/>
            <person name="Nakanishi Y."/>
            <person name="Yoshimura K."/>
            <person name="Tobe T."/>
            <person name="Clarke J.M."/>
            <person name="Topping D.L."/>
            <person name="Suzuki T."/>
            <person name="Taylor T.D."/>
            <person name="Itoh K."/>
            <person name="Kikuchi J."/>
            <person name="Morita H."/>
            <person name="Hattori M."/>
            <person name="Ohno H."/>
        </authorList>
    </citation>
    <scope>NUCLEOTIDE SEQUENCE [LARGE SCALE GENOMIC DNA]</scope>
    <source>
        <strain>ATCC 15697 / DSM 20088 / JCM 1222 / NCTC 11817 / S12</strain>
    </source>
</reference>
<feature type="chain" id="PRO_1000200532" description="UvrABC system protein B">
    <location>
        <begin position="1"/>
        <end position="703"/>
    </location>
</feature>
<feature type="domain" description="Helicase ATP-binding" evidence="1">
    <location>
        <begin position="33"/>
        <end position="190"/>
    </location>
</feature>
<feature type="domain" description="Helicase C-terminal" evidence="1">
    <location>
        <begin position="436"/>
        <end position="589"/>
    </location>
</feature>
<feature type="domain" description="UVR" evidence="1">
    <location>
        <begin position="659"/>
        <end position="694"/>
    </location>
</feature>
<feature type="short sequence motif" description="Beta-hairpin">
    <location>
        <begin position="99"/>
        <end position="122"/>
    </location>
</feature>
<feature type="binding site" evidence="1">
    <location>
        <begin position="46"/>
        <end position="53"/>
    </location>
    <ligand>
        <name>ATP</name>
        <dbReference type="ChEBI" id="CHEBI:30616"/>
    </ligand>
</feature>
<name>UVRB_BIFLS</name>
<organism>
    <name type="scientific">Bifidobacterium longum subsp. infantis (strain ATCC 15697 / DSM 20088 / JCM 1222 / NCTC 11817 / S12)</name>
    <dbReference type="NCBI Taxonomy" id="391904"/>
    <lineage>
        <taxon>Bacteria</taxon>
        <taxon>Bacillati</taxon>
        <taxon>Actinomycetota</taxon>
        <taxon>Actinomycetes</taxon>
        <taxon>Bifidobacteriales</taxon>
        <taxon>Bifidobacteriaceae</taxon>
        <taxon>Bifidobacterium</taxon>
    </lineage>
</organism>
<accession>B7GSZ2</accession>
<accession>E8MLF9</accession>
<keyword id="KW-0067">ATP-binding</keyword>
<keyword id="KW-0963">Cytoplasm</keyword>
<keyword id="KW-0227">DNA damage</keyword>
<keyword id="KW-0228">DNA excision</keyword>
<keyword id="KW-0234">DNA repair</keyword>
<keyword id="KW-0267">Excision nuclease</keyword>
<keyword id="KW-0347">Helicase</keyword>
<keyword id="KW-0378">Hydrolase</keyword>
<keyword id="KW-0547">Nucleotide-binding</keyword>
<keyword id="KW-0742">SOS response</keyword>
<evidence type="ECO:0000255" key="1">
    <source>
        <dbReference type="HAMAP-Rule" id="MF_00204"/>
    </source>
</evidence>
<protein>
    <recommendedName>
        <fullName evidence="1">UvrABC system protein B</fullName>
        <shortName evidence="1">Protein UvrB</shortName>
    </recommendedName>
    <alternativeName>
        <fullName evidence="1">Excinuclease ABC subunit B</fullName>
    </alternativeName>
</protein>
<gene>
    <name evidence="1" type="primary">uvrB</name>
    <name type="ordered locus">Blon_1747</name>
    <name type="ordered locus">BLIJ_1806</name>
</gene>